<evidence type="ECO:0000255" key="1">
    <source>
        <dbReference type="HAMAP-Rule" id="MF_00071"/>
    </source>
</evidence>
<comment type="function">
    <text evidence="1">Required for accurate and efficient protein synthesis under certain stress conditions. May act as a fidelity factor of the translation reaction, by catalyzing a one-codon backward translocation of tRNAs on improperly translocated ribosomes. Back-translocation proceeds from a post-translocation (POST) complex to a pre-translocation (PRE) complex, thus giving elongation factor G a second chance to translocate the tRNAs correctly. Binds to ribosomes in a GTP-dependent manner.</text>
</comment>
<comment type="catalytic activity">
    <reaction evidence="1">
        <text>GTP + H2O = GDP + phosphate + H(+)</text>
        <dbReference type="Rhea" id="RHEA:19669"/>
        <dbReference type="ChEBI" id="CHEBI:15377"/>
        <dbReference type="ChEBI" id="CHEBI:15378"/>
        <dbReference type="ChEBI" id="CHEBI:37565"/>
        <dbReference type="ChEBI" id="CHEBI:43474"/>
        <dbReference type="ChEBI" id="CHEBI:58189"/>
        <dbReference type="EC" id="3.6.5.n1"/>
    </reaction>
</comment>
<comment type="subcellular location">
    <subcellularLocation>
        <location evidence="1">Cell inner membrane</location>
        <topology evidence="1">Peripheral membrane protein</topology>
        <orientation evidence="1">Cytoplasmic side</orientation>
    </subcellularLocation>
</comment>
<comment type="similarity">
    <text evidence="1">Belongs to the TRAFAC class translation factor GTPase superfamily. Classic translation factor GTPase family. LepA subfamily.</text>
</comment>
<sequence>MRAMACVRRVRNFCIVAHIDHGKSTLADRLIERTRAVEERLQHAQMTDNMELERERGITIKSHAVCIPYTDAHGTEYVLNFVDTPGHADFAYEVSRAIAACEGALLVVDATQGVESQTISNLYLVLEHNLEIIPVINKIDLPTADVPRVLQQVEHDLGLDPASSVLISAKTGENVDALFDAIITRIPPPQGSGTAALQALVFDCHYDQYRGVVVHIRVFEGQVTSGMVIRFMSNGAEYRVEETGVFVFNLIAREALCAGDVGYLSANVKTVSDVQVGDTITDASCPCDTPRAGFRRVKPVVFSSVYPVDTDECEQLREALERLALNDASISWERDSSLALGHGFRCGFLGLLHLEVVQQRLEREFNQTVIFTAPQVQYYVFLKTGQRIVCDNPAHYPLEQEIAQVHEPYIRATIITPTEVLGAVMTLCIEKRAYQTAVNYLDQKRVELVYEMPLAEILFGFYDRLKSISHGYASFDYELIESKLTDLVKVDILINGKPVDALAQLCYRPHARRRAQAVCARLKEEISRQQFKIAIQGSIGGQIISRETVSPFRKDVLAKCYGGDITRKRKLLEKQKEGKKRMKMVGDVEIPQTAFLSVLKEASDA</sequence>
<feature type="chain" id="PRO_0000176366" description="Elongation factor 4">
    <location>
        <begin position="1"/>
        <end position="605"/>
    </location>
</feature>
<feature type="domain" description="tr-type G">
    <location>
        <begin position="8"/>
        <end position="190"/>
    </location>
</feature>
<feature type="binding site" evidence="1">
    <location>
        <begin position="20"/>
        <end position="25"/>
    </location>
    <ligand>
        <name>GTP</name>
        <dbReference type="ChEBI" id="CHEBI:37565"/>
    </ligand>
</feature>
<feature type="binding site" evidence="1">
    <location>
        <begin position="137"/>
        <end position="140"/>
    </location>
    <ligand>
        <name>GTP</name>
        <dbReference type="ChEBI" id="CHEBI:37565"/>
    </ligand>
</feature>
<reference key="1">
    <citation type="journal article" date="1998" name="Science">
        <title>Complete genome sequence of Treponema pallidum, the syphilis spirochete.</title>
        <authorList>
            <person name="Fraser C.M."/>
            <person name="Norris S.J."/>
            <person name="Weinstock G.M."/>
            <person name="White O."/>
            <person name="Sutton G.G."/>
            <person name="Dodson R.J."/>
            <person name="Gwinn M.L."/>
            <person name="Hickey E.K."/>
            <person name="Clayton R.A."/>
            <person name="Ketchum K.A."/>
            <person name="Sodergren E."/>
            <person name="Hardham J.M."/>
            <person name="McLeod M.P."/>
            <person name="Salzberg S.L."/>
            <person name="Peterson J.D."/>
            <person name="Khalak H.G."/>
            <person name="Richardson D.L."/>
            <person name="Howell J.K."/>
            <person name="Chidambaram M."/>
            <person name="Utterback T.R."/>
            <person name="McDonald L.A."/>
            <person name="Artiach P."/>
            <person name="Bowman C."/>
            <person name="Cotton M.D."/>
            <person name="Fujii C."/>
            <person name="Garland S.A."/>
            <person name="Hatch B."/>
            <person name="Horst K."/>
            <person name="Roberts K.M."/>
            <person name="Sandusky M."/>
            <person name="Weidman J.F."/>
            <person name="Smith H.O."/>
            <person name="Venter J.C."/>
        </authorList>
    </citation>
    <scope>NUCLEOTIDE SEQUENCE [LARGE SCALE GENOMIC DNA]</scope>
    <source>
        <strain>Nichols</strain>
    </source>
</reference>
<organism>
    <name type="scientific">Treponema pallidum (strain Nichols)</name>
    <dbReference type="NCBI Taxonomy" id="243276"/>
    <lineage>
        <taxon>Bacteria</taxon>
        <taxon>Pseudomonadati</taxon>
        <taxon>Spirochaetota</taxon>
        <taxon>Spirochaetia</taxon>
        <taxon>Spirochaetales</taxon>
        <taxon>Treponemataceae</taxon>
        <taxon>Treponema</taxon>
    </lineage>
</organism>
<keyword id="KW-0997">Cell inner membrane</keyword>
<keyword id="KW-1003">Cell membrane</keyword>
<keyword id="KW-0342">GTP-binding</keyword>
<keyword id="KW-0378">Hydrolase</keyword>
<keyword id="KW-0472">Membrane</keyword>
<keyword id="KW-0547">Nucleotide-binding</keyword>
<keyword id="KW-0648">Protein biosynthesis</keyword>
<keyword id="KW-1185">Reference proteome</keyword>
<name>LEPA_TREPA</name>
<protein>
    <recommendedName>
        <fullName evidence="1">Elongation factor 4</fullName>
        <shortName evidence="1">EF-4</shortName>
        <ecNumber evidence="1">3.6.5.n1</ecNumber>
    </recommendedName>
    <alternativeName>
        <fullName evidence="1">Ribosomal back-translocase LepA</fullName>
    </alternativeName>
</protein>
<proteinExistence type="inferred from homology"/>
<dbReference type="EC" id="3.6.5.n1" evidence="1"/>
<dbReference type="EMBL" id="AE000520">
    <property type="protein sequence ID" value="AAC65498.1"/>
    <property type="molecule type" value="Genomic_DNA"/>
</dbReference>
<dbReference type="PIR" id="E71314">
    <property type="entry name" value="E71314"/>
</dbReference>
<dbReference type="RefSeq" id="WP_010881959.1">
    <property type="nucleotide sequence ID" value="NC_021490.2"/>
</dbReference>
<dbReference type="SMR" id="O83523"/>
<dbReference type="IntAct" id="O83523">
    <property type="interactions" value="1"/>
</dbReference>
<dbReference type="STRING" id="243276.TP_0510"/>
<dbReference type="EnsemblBacteria" id="AAC65498">
    <property type="protein sequence ID" value="AAC65498"/>
    <property type="gene ID" value="TP_0510"/>
</dbReference>
<dbReference type="GeneID" id="93876279"/>
<dbReference type="KEGG" id="tpa:TP_0510"/>
<dbReference type="KEGG" id="tpw:TPANIC_0510"/>
<dbReference type="eggNOG" id="COG0481">
    <property type="taxonomic scope" value="Bacteria"/>
</dbReference>
<dbReference type="HOGENOM" id="CLU_009995_3_3_12"/>
<dbReference type="OrthoDB" id="9804431at2"/>
<dbReference type="Proteomes" id="UP000000811">
    <property type="component" value="Chromosome"/>
</dbReference>
<dbReference type="GO" id="GO:0005886">
    <property type="term" value="C:plasma membrane"/>
    <property type="evidence" value="ECO:0007669"/>
    <property type="project" value="UniProtKB-SubCell"/>
</dbReference>
<dbReference type="GO" id="GO:0005525">
    <property type="term" value="F:GTP binding"/>
    <property type="evidence" value="ECO:0007669"/>
    <property type="project" value="UniProtKB-UniRule"/>
</dbReference>
<dbReference type="GO" id="GO:0003924">
    <property type="term" value="F:GTPase activity"/>
    <property type="evidence" value="ECO:0007669"/>
    <property type="project" value="UniProtKB-UniRule"/>
</dbReference>
<dbReference type="GO" id="GO:0043022">
    <property type="term" value="F:ribosome binding"/>
    <property type="evidence" value="ECO:0007669"/>
    <property type="project" value="UniProtKB-UniRule"/>
</dbReference>
<dbReference type="GO" id="GO:0003746">
    <property type="term" value="F:translation elongation factor activity"/>
    <property type="evidence" value="ECO:0007669"/>
    <property type="project" value="UniProtKB-UniRule"/>
</dbReference>
<dbReference type="GO" id="GO:0045727">
    <property type="term" value="P:positive regulation of translation"/>
    <property type="evidence" value="ECO:0007669"/>
    <property type="project" value="UniProtKB-UniRule"/>
</dbReference>
<dbReference type="CDD" id="cd03699">
    <property type="entry name" value="EF4_II"/>
    <property type="match status" value="1"/>
</dbReference>
<dbReference type="CDD" id="cd16260">
    <property type="entry name" value="EF4_III"/>
    <property type="match status" value="1"/>
</dbReference>
<dbReference type="CDD" id="cd01890">
    <property type="entry name" value="LepA"/>
    <property type="match status" value="1"/>
</dbReference>
<dbReference type="CDD" id="cd03709">
    <property type="entry name" value="lepA_C"/>
    <property type="match status" value="1"/>
</dbReference>
<dbReference type="FunFam" id="3.40.50.300:FF:000078">
    <property type="entry name" value="Elongation factor 4"/>
    <property type="match status" value="1"/>
</dbReference>
<dbReference type="FunFam" id="2.40.30.10:FF:000015">
    <property type="entry name" value="Translation factor GUF1, mitochondrial"/>
    <property type="match status" value="1"/>
</dbReference>
<dbReference type="FunFam" id="3.30.70.240:FF:000007">
    <property type="entry name" value="Translation factor GUF1, mitochondrial"/>
    <property type="match status" value="1"/>
</dbReference>
<dbReference type="FunFam" id="3.30.70.2570:FF:000001">
    <property type="entry name" value="Translation factor GUF1, mitochondrial"/>
    <property type="match status" value="1"/>
</dbReference>
<dbReference type="FunFam" id="3.30.70.870:FF:000004">
    <property type="entry name" value="Translation factor GUF1, mitochondrial"/>
    <property type="match status" value="1"/>
</dbReference>
<dbReference type="Gene3D" id="3.30.70.240">
    <property type="match status" value="1"/>
</dbReference>
<dbReference type="Gene3D" id="3.30.70.2570">
    <property type="entry name" value="Elongation factor 4, C-terminal domain"/>
    <property type="match status" value="1"/>
</dbReference>
<dbReference type="Gene3D" id="3.30.70.870">
    <property type="entry name" value="Elongation Factor G (Translational Gtpase), domain 3"/>
    <property type="match status" value="1"/>
</dbReference>
<dbReference type="Gene3D" id="3.40.50.300">
    <property type="entry name" value="P-loop containing nucleotide triphosphate hydrolases"/>
    <property type="match status" value="1"/>
</dbReference>
<dbReference type="Gene3D" id="2.40.30.10">
    <property type="entry name" value="Translation factors"/>
    <property type="match status" value="1"/>
</dbReference>
<dbReference type="HAMAP" id="MF_00071">
    <property type="entry name" value="LepA"/>
    <property type="match status" value="1"/>
</dbReference>
<dbReference type="InterPro" id="IPR006297">
    <property type="entry name" value="EF-4"/>
</dbReference>
<dbReference type="InterPro" id="IPR041095">
    <property type="entry name" value="EFG_II"/>
</dbReference>
<dbReference type="InterPro" id="IPR035647">
    <property type="entry name" value="EFG_III/V"/>
</dbReference>
<dbReference type="InterPro" id="IPR000640">
    <property type="entry name" value="EFG_V-like"/>
</dbReference>
<dbReference type="InterPro" id="IPR004161">
    <property type="entry name" value="EFTu-like_2"/>
</dbReference>
<dbReference type="InterPro" id="IPR038363">
    <property type="entry name" value="LepA_C_sf"/>
</dbReference>
<dbReference type="InterPro" id="IPR013842">
    <property type="entry name" value="LepA_CTD"/>
</dbReference>
<dbReference type="InterPro" id="IPR035654">
    <property type="entry name" value="LepA_IV"/>
</dbReference>
<dbReference type="InterPro" id="IPR027417">
    <property type="entry name" value="P-loop_NTPase"/>
</dbReference>
<dbReference type="InterPro" id="IPR005225">
    <property type="entry name" value="Small_GTP-bd"/>
</dbReference>
<dbReference type="InterPro" id="IPR000795">
    <property type="entry name" value="T_Tr_GTP-bd_dom"/>
</dbReference>
<dbReference type="InterPro" id="IPR009000">
    <property type="entry name" value="Transl_B-barrel_sf"/>
</dbReference>
<dbReference type="NCBIfam" id="TIGR01393">
    <property type="entry name" value="lepA"/>
    <property type="match status" value="1"/>
</dbReference>
<dbReference type="NCBIfam" id="TIGR00231">
    <property type="entry name" value="small_GTP"/>
    <property type="match status" value="1"/>
</dbReference>
<dbReference type="PANTHER" id="PTHR43512:SF4">
    <property type="entry name" value="TRANSLATION FACTOR GUF1 HOMOLOG, CHLOROPLASTIC"/>
    <property type="match status" value="1"/>
</dbReference>
<dbReference type="PANTHER" id="PTHR43512">
    <property type="entry name" value="TRANSLATION FACTOR GUF1-RELATED"/>
    <property type="match status" value="1"/>
</dbReference>
<dbReference type="Pfam" id="PF00679">
    <property type="entry name" value="EFG_C"/>
    <property type="match status" value="1"/>
</dbReference>
<dbReference type="Pfam" id="PF14492">
    <property type="entry name" value="EFG_III"/>
    <property type="match status" value="1"/>
</dbReference>
<dbReference type="Pfam" id="PF00009">
    <property type="entry name" value="GTP_EFTU"/>
    <property type="match status" value="1"/>
</dbReference>
<dbReference type="Pfam" id="PF03144">
    <property type="entry name" value="GTP_EFTU_D2"/>
    <property type="match status" value="1"/>
</dbReference>
<dbReference type="Pfam" id="PF06421">
    <property type="entry name" value="LepA_C"/>
    <property type="match status" value="1"/>
</dbReference>
<dbReference type="PRINTS" id="PR00315">
    <property type="entry name" value="ELONGATNFCT"/>
</dbReference>
<dbReference type="SUPFAM" id="SSF54980">
    <property type="entry name" value="EF-G C-terminal domain-like"/>
    <property type="match status" value="2"/>
</dbReference>
<dbReference type="SUPFAM" id="SSF52540">
    <property type="entry name" value="P-loop containing nucleoside triphosphate hydrolases"/>
    <property type="match status" value="1"/>
</dbReference>
<dbReference type="SUPFAM" id="SSF50447">
    <property type="entry name" value="Translation proteins"/>
    <property type="match status" value="1"/>
</dbReference>
<dbReference type="PROSITE" id="PS51722">
    <property type="entry name" value="G_TR_2"/>
    <property type="match status" value="1"/>
</dbReference>
<gene>
    <name evidence="1" type="primary">lepA</name>
    <name type="ordered locus">TP_0510</name>
</gene>
<accession>O83523</accession>